<keyword id="KW-1185">Reference proteome</keyword>
<keyword id="KW-0687">Ribonucleoprotein</keyword>
<keyword id="KW-0689">Ribosomal protein</keyword>
<keyword id="KW-0694">RNA-binding</keyword>
<keyword id="KW-0699">rRNA-binding</keyword>
<proteinExistence type="inferred from homology"/>
<sequence length="191" mass="20737">MEYIVEKIGMSRTITNPSIAVTLLRVVNAKVCEVEGGKALVAYPKGKASNKCVAGQQKKYNLSAEYNRFATLEVANTEAGDLDETPLNEAKILKVSFNTKGRGYSGVMKRHNFAGGPASHGSRFHRRHGSIGNREWPGRVQPGMKMAGHYGNTKVTIKNEVVSYDAENKILVVKGAVPGYNGAMGKIRIAK</sequence>
<organism>
    <name type="scientific">Campylobacter jejuni subsp. jejuni serotype O:2 (strain ATCC 700819 / NCTC 11168)</name>
    <dbReference type="NCBI Taxonomy" id="192222"/>
    <lineage>
        <taxon>Bacteria</taxon>
        <taxon>Pseudomonadati</taxon>
        <taxon>Campylobacterota</taxon>
        <taxon>Epsilonproteobacteria</taxon>
        <taxon>Campylobacterales</taxon>
        <taxon>Campylobacteraceae</taxon>
        <taxon>Campylobacter</taxon>
    </lineage>
</organism>
<protein>
    <recommendedName>
        <fullName evidence="3">Large ribosomal subunit protein uL3</fullName>
    </recommendedName>
    <alternativeName>
        <fullName>50S ribosomal protein L3</fullName>
    </alternativeName>
</protein>
<evidence type="ECO:0000250" key="1"/>
<evidence type="ECO:0000256" key="2">
    <source>
        <dbReference type="SAM" id="MobiDB-lite"/>
    </source>
</evidence>
<evidence type="ECO:0000305" key="3"/>
<reference key="1">
    <citation type="journal article" date="2000" name="Nature">
        <title>The genome sequence of the food-borne pathogen Campylobacter jejuni reveals hypervariable sequences.</title>
        <authorList>
            <person name="Parkhill J."/>
            <person name="Wren B.W."/>
            <person name="Mungall K.L."/>
            <person name="Ketley J.M."/>
            <person name="Churcher C.M."/>
            <person name="Basham D."/>
            <person name="Chillingworth T."/>
            <person name="Davies R.M."/>
            <person name="Feltwell T."/>
            <person name="Holroyd S."/>
            <person name="Jagels K."/>
            <person name="Karlyshev A.V."/>
            <person name="Moule S."/>
            <person name="Pallen M.J."/>
            <person name="Penn C.W."/>
            <person name="Quail M.A."/>
            <person name="Rajandream M.A."/>
            <person name="Rutherford K.M."/>
            <person name="van Vliet A.H.M."/>
            <person name="Whitehead S."/>
            <person name="Barrell B.G."/>
        </authorList>
    </citation>
    <scope>NUCLEOTIDE SEQUENCE [LARGE SCALE GENOMIC DNA]</scope>
    <source>
        <strain>ATCC 700819 / NCTC 11168</strain>
    </source>
</reference>
<name>RL3_CAMJE</name>
<accession>Q9PLX1</accession>
<accession>Q0P7S4</accession>
<gene>
    <name type="primary">rplC</name>
    <name type="ordered locus">Cj1707c</name>
</gene>
<comment type="function">
    <text evidence="1">One of the primary rRNA binding proteins, it binds directly near the 3'-end of the 23S rRNA, where it nucleates assembly of the 50S subunit.</text>
</comment>
<comment type="subunit">
    <text evidence="1">Part of the 50S ribosomal subunit. Forms a cluster with proteins L14 and L19 (By similarity).</text>
</comment>
<comment type="similarity">
    <text evidence="3">Belongs to the universal ribosomal protein uL3 family.</text>
</comment>
<feature type="chain" id="PRO_0000077080" description="Large ribosomal subunit protein uL3">
    <location>
        <begin position="1"/>
        <end position="191"/>
    </location>
</feature>
<feature type="region of interest" description="Disordered" evidence="2">
    <location>
        <begin position="115"/>
        <end position="137"/>
    </location>
</feature>
<dbReference type="EMBL" id="AL111168">
    <property type="protein sequence ID" value="CAL35801.1"/>
    <property type="molecule type" value="Genomic_DNA"/>
</dbReference>
<dbReference type="PIR" id="G81268">
    <property type="entry name" value="G81268"/>
</dbReference>
<dbReference type="RefSeq" id="WP_002864792.1">
    <property type="nucleotide sequence ID" value="NZ_SZUC01000002.1"/>
</dbReference>
<dbReference type="RefSeq" id="YP_002345073.1">
    <property type="nucleotide sequence ID" value="NC_002163.1"/>
</dbReference>
<dbReference type="SMR" id="Q9PLX1"/>
<dbReference type="IntAct" id="Q9PLX1">
    <property type="interactions" value="6"/>
</dbReference>
<dbReference type="STRING" id="192222.Cj1707c"/>
<dbReference type="PaxDb" id="192222-Cj1707c"/>
<dbReference type="EnsemblBacteria" id="CAL35801">
    <property type="protein sequence ID" value="CAL35801"/>
    <property type="gene ID" value="Cj1707c"/>
</dbReference>
<dbReference type="GeneID" id="905981"/>
<dbReference type="KEGG" id="cje:Cj1707c"/>
<dbReference type="PATRIC" id="fig|192222.6.peg.1681"/>
<dbReference type="eggNOG" id="COG0087">
    <property type="taxonomic scope" value="Bacteria"/>
</dbReference>
<dbReference type="HOGENOM" id="CLU_044142_4_1_7"/>
<dbReference type="OrthoDB" id="9806135at2"/>
<dbReference type="Proteomes" id="UP000000799">
    <property type="component" value="Chromosome"/>
</dbReference>
<dbReference type="GO" id="GO:0022625">
    <property type="term" value="C:cytosolic large ribosomal subunit"/>
    <property type="evidence" value="ECO:0007669"/>
    <property type="project" value="TreeGrafter"/>
</dbReference>
<dbReference type="GO" id="GO:0019843">
    <property type="term" value="F:rRNA binding"/>
    <property type="evidence" value="ECO:0007669"/>
    <property type="project" value="UniProtKB-KW"/>
</dbReference>
<dbReference type="GO" id="GO:0003735">
    <property type="term" value="F:structural constituent of ribosome"/>
    <property type="evidence" value="ECO:0007669"/>
    <property type="project" value="InterPro"/>
</dbReference>
<dbReference type="GO" id="GO:0006412">
    <property type="term" value="P:translation"/>
    <property type="evidence" value="ECO:0007669"/>
    <property type="project" value="InterPro"/>
</dbReference>
<dbReference type="FunFam" id="2.40.30.10:FF:000004">
    <property type="entry name" value="50S ribosomal protein L3"/>
    <property type="match status" value="1"/>
</dbReference>
<dbReference type="Gene3D" id="2.40.30.10">
    <property type="entry name" value="Translation factors"/>
    <property type="match status" value="1"/>
</dbReference>
<dbReference type="InterPro" id="IPR000597">
    <property type="entry name" value="Ribosomal_uL3"/>
</dbReference>
<dbReference type="InterPro" id="IPR019927">
    <property type="entry name" value="Ribosomal_uL3_bac/org-type"/>
</dbReference>
<dbReference type="InterPro" id="IPR009000">
    <property type="entry name" value="Transl_B-barrel_sf"/>
</dbReference>
<dbReference type="NCBIfam" id="TIGR03625">
    <property type="entry name" value="L3_bact"/>
    <property type="match status" value="1"/>
</dbReference>
<dbReference type="PANTHER" id="PTHR11229">
    <property type="entry name" value="50S RIBOSOMAL PROTEIN L3"/>
    <property type="match status" value="1"/>
</dbReference>
<dbReference type="PANTHER" id="PTHR11229:SF16">
    <property type="entry name" value="LARGE RIBOSOMAL SUBUNIT PROTEIN UL3C"/>
    <property type="match status" value="1"/>
</dbReference>
<dbReference type="Pfam" id="PF00297">
    <property type="entry name" value="Ribosomal_L3"/>
    <property type="match status" value="1"/>
</dbReference>
<dbReference type="SUPFAM" id="SSF50447">
    <property type="entry name" value="Translation proteins"/>
    <property type="match status" value="1"/>
</dbReference>